<evidence type="ECO:0000255" key="1">
    <source>
        <dbReference type="HAMAP-Rule" id="MF_00423"/>
    </source>
</evidence>
<name>SELA_ALKMQ</name>
<proteinExistence type="inferred from homology"/>
<comment type="function">
    <text evidence="1">Converts seryl-tRNA(Sec) to selenocysteinyl-tRNA(Sec) required for selenoprotein biosynthesis.</text>
</comment>
<comment type="catalytic activity">
    <reaction evidence="1">
        <text>L-seryl-tRNA(Sec) + selenophosphate + H(+) = L-selenocysteinyl-tRNA(Sec) + phosphate</text>
        <dbReference type="Rhea" id="RHEA:22728"/>
        <dbReference type="Rhea" id="RHEA-COMP:9742"/>
        <dbReference type="Rhea" id="RHEA-COMP:9743"/>
        <dbReference type="ChEBI" id="CHEBI:15378"/>
        <dbReference type="ChEBI" id="CHEBI:16144"/>
        <dbReference type="ChEBI" id="CHEBI:43474"/>
        <dbReference type="ChEBI" id="CHEBI:78533"/>
        <dbReference type="ChEBI" id="CHEBI:78573"/>
        <dbReference type="EC" id="2.9.1.1"/>
    </reaction>
</comment>
<comment type="cofactor">
    <cofactor evidence="1">
        <name>pyridoxal 5'-phosphate</name>
        <dbReference type="ChEBI" id="CHEBI:597326"/>
    </cofactor>
</comment>
<comment type="pathway">
    <text evidence="1">Aminoacyl-tRNA biosynthesis; selenocysteinyl-tRNA(Sec) biosynthesis; selenocysteinyl-tRNA(Sec) from L-seryl-tRNA(Sec) (bacterial route): step 1/1.</text>
</comment>
<comment type="subcellular location">
    <subcellularLocation>
        <location evidence="1">Cytoplasm</location>
    </subcellularLocation>
</comment>
<comment type="similarity">
    <text evidence="1">Belongs to the SelA family.</text>
</comment>
<dbReference type="EC" id="2.9.1.1" evidence="1"/>
<dbReference type="EMBL" id="CP000724">
    <property type="protein sequence ID" value="ABR48480.1"/>
    <property type="molecule type" value="Genomic_DNA"/>
</dbReference>
<dbReference type="RefSeq" id="WP_012063455.1">
    <property type="nucleotide sequence ID" value="NC_009633.1"/>
</dbReference>
<dbReference type="SMR" id="A6TQL2"/>
<dbReference type="STRING" id="293826.Amet_2323"/>
<dbReference type="KEGG" id="amt:Amet_2323"/>
<dbReference type="eggNOG" id="COG1921">
    <property type="taxonomic scope" value="Bacteria"/>
</dbReference>
<dbReference type="HOGENOM" id="CLU_038142_1_0_9"/>
<dbReference type="OrthoDB" id="9787096at2"/>
<dbReference type="UniPathway" id="UPA00906">
    <property type="reaction ID" value="UER00896"/>
</dbReference>
<dbReference type="Proteomes" id="UP000001572">
    <property type="component" value="Chromosome"/>
</dbReference>
<dbReference type="GO" id="GO:0005737">
    <property type="term" value="C:cytoplasm"/>
    <property type="evidence" value="ECO:0007669"/>
    <property type="project" value="UniProtKB-SubCell"/>
</dbReference>
<dbReference type="GO" id="GO:0004125">
    <property type="term" value="F:L-seryl-tRNA(Sec) selenium transferase activity"/>
    <property type="evidence" value="ECO:0007669"/>
    <property type="project" value="UniProtKB-UniRule"/>
</dbReference>
<dbReference type="GO" id="GO:0001717">
    <property type="term" value="P:conversion of seryl-tRNAsec to selenocys-tRNAsec"/>
    <property type="evidence" value="ECO:0007669"/>
    <property type="project" value="UniProtKB-UniRule"/>
</dbReference>
<dbReference type="GO" id="GO:0001514">
    <property type="term" value="P:selenocysteine incorporation"/>
    <property type="evidence" value="ECO:0007669"/>
    <property type="project" value="UniProtKB-UniRule"/>
</dbReference>
<dbReference type="Gene3D" id="3.90.1150.180">
    <property type="match status" value="1"/>
</dbReference>
<dbReference type="Gene3D" id="3.40.640.10">
    <property type="entry name" value="Type I PLP-dependent aspartate aminotransferase-like (Major domain)"/>
    <property type="match status" value="1"/>
</dbReference>
<dbReference type="HAMAP" id="MF_00423">
    <property type="entry name" value="SelA"/>
    <property type="match status" value="1"/>
</dbReference>
<dbReference type="InterPro" id="IPR015424">
    <property type="entry name" value="PyrdxlP-dep_Trfase"/>
</dbReference>
<dbReference type="InterPro" id="IPR015421">
    <property type="entry name" value="PyrdxlP-dep_Trfase_major"/>
</dbReference>
<dbReference type="InterPro" id="IPR018319">
    <property type="entry name" value="SelA-like"/>
</dbReference>
<dbReference type="InterPro" id="IPR004534">
    <property type="entry name" value="SelA_trans"/>
</dbReference>
<dbReference type="InterPro" id="IPR025862">
    <property type="entry name" value="SelA_trans_N_dom"/>
</dbReference>
<dbReference type="NCBIfam" id="TIGR00474">
    <property type="entry name" value="selA"/>
    <property type="match status" value="1"/>
</dbReference>
<dbReference type="PANTHER" id="PTHR32328">
    <property type="entry name" value="L-SERYL-TRNA(SEC) SELENIUM TRANSFERASE"/>
    <property type="match status" value="1"/>
</dbReference>
<dbReference type="PANTHER" id="PTHR32328:SF0">
    <property type="entry name" value="L-SERYL-TRNA(SEC) SELENIUM TRANSFERASE"/>
    <property type="match status" value="1"/>
</dbReference>
<dbReference type="Pfam" id="PF12390">
    <property type="entry name" value="Se-cys_synth_N"/>
    <property type="match status" value="1"/>
</dbReference>
<dbReference type="Pfam" id="PF03841">
    <property type="entry name" value="SelA"/>
    <property type="match status" value="1"/>
</dbReference>
<dbReference type="SUPFAM" id="SSF53383">
    <property type="entry name" value="PLP-dependent transferases"/>
    <property type="match status" value="1"/>
</dbReference>
<organism>
    <name type="scientific">Alkaliphilus metalliredigens (strain QYMF)</name>
    <dbReference type="NCBI Taxonomy" id="293826"/>
    <lineage>
        <taxon>Bacteria</taxon>
        <taxon>Bacillati</taxon>
        <taxon>Bacillota</taxon>
        <taxon>Clostridia</taxon>
        <taxon>Peptostreptococcales</taxon>
        <taxon>Natronincolaceae</taxon>
        <taxon>Alkaliphilus</taxon>
    </lineage>
</organism>
<reference key="1">
    <citation type="journal article" date="2016" name="Genome Announc.">
        <title>Complete genome sequence of Alkaliphilus metalliredigens strain QYMF, an alkaliphilic and metal-reducing bacterium isolated from borax-contaminated leachate ponds.</title>
        <authorList>
            <person name="Hwang C."/>
            <person name="Copeland A."/>
            <person name="Lucas S."/>
            <person name="Lapidus A."/>
            <person name="Barry K."/>
            <person name="Detter J.C."/>
            <person name="Glavina Del Rio T."/>
            <person name="Hammon N."/>
            <person name="Israni S."/>
            <person name="Dalin E."/>
            <person name="Tice H."/>
            <person name="Pitluck S."/>
            <person name="Chertkov O."/>
            <person name="Brettin T."/>
            <person name="Bruce D."/>
            <person name="Han C."/>
            <person name="Schmutz J."/>
            <person name="Larimer F."/>
            <person name="Land M.L."/>
            <person name="Hauser L."/>
            <person name="Kyrpides N."/>
            <person name="Mikhailova N."/>
            <person name="Ye Q."/>
            <person name="Zhou J."/>
            <person name="Richardson P."/>
            <person name="Fields M.W."/>
        </authorList>
    </citation>
    <scope>NUCLEOTIDE SEQUENCE [LARGE SCALE GENOMIC DNA]</scope>
    <source>
        <strain>QYMF</strain>
    </source>
</reference>
<gene>
    <name evidence="1" type="primary">selA</name>
    <name type="ordered locus">Amet_2323</name>
</gene>
<feature type="chain" id="PRO_1000060095" description="L-seryl-tRNA(Sec) selenium transferase">
    <location>
        <begin position="1"/>
        <end position="467"/>
    </location>
</feature>
<feature type="modified residue" description="N6-(pyridoxal phosphate)lysine" evidence="1">
    <location>
        <position position="298"/>
    </location>
</feature>
<sequence length="467" mass="52130">MNKGRILSQLPSVDELIKNLEHDKLEKMIPRSVVVEQTRITVDTYRKAILTMDEGSLRDYQIDITSMHDEIKQACESFCSMNLREVINGTGVILHTNLGRSLLSEEIKGQIWEVASGYSTLEIDVTTGKRGSRYNHVVDVLKHLTGAEDALVVNNNAAAVMLVLGTIAKGKEVIVSRGELVEIGGSFRVPDVMEQSGGKLREVGTTNKTHLWDYEGAISDETAALLKVHTSNYRIMGFTESVGLEEIVELGNRYHIPTIEDIGSGVLIDLQKYGLAHEPTVQESVKAGVDIVTFSGDKLLGGPQAGIIVGKRKWIEKMKKNPLTRAIRVDKLTMAALEATLKLYLDEDTAIKHIPTLKMLTENLDTISERASDLFRKLQALDEHLLVRIEEDFSQVGGGSMPLEKLPTKVITLEHTILSAAQMETKLRNFKRPIFTRIRDEKVMMDLRTIREKDFVFIVEALKTVAK</sequence>
<keyword id="KW-0963">Cytoplasm</keyword>
<keyword id="KW-0648">Protein biosynthesis</keyword>
<keyword id="KW-0663">Pyridoxal phosphate</keyword>
<keyword id="KW-1185">Reference proteome</keyword>
<keyword id="KW-0711">Selenium</keyword>
<keyword id="KW-0808">Transferase</keyword>
<accession>A6TQL2</accession>
<protein>
    <recommendedName>
        <fullName evidence="1">L-seryl-tRNA(Sec) selenium transferase</fullName>
        <ecNumber evidence="1">2.9.1.1</ecNumber>
    </recommendedName>
    <alternativeName>
        <fullName evidence="1">Selenocysteine synthase</fullName>
        <shortName evidence="1">Sec synthase</shortName>
    </alternativeName>
    <alternativeName>
        <fullName evidence="1">Selenocysteinyl-tRNA(Sec) synthase</fullName>
    </alternativeName>
</protein>